<feature type="chain" id="PRO_0000179013" description="GTPase Der">
    <location>
        <begin position="1"/>
        <end position="444"/>
    </location>
</feature>
<feature type="domain" description="EngA-type G 1">
    <location>
        <begin position="2"/>
        <end position="167"/>
    </location>
</feature>
<feature type="domain" description="EngA-type G 2">
    <location>
        <begin position="173"/>
        <end position="349"/>
    </location>
</feature>
<feature type="domain" description="KH-like" evidence="1">
    <location>
        <begin position="350"/>
        <end position="434"/>
    </location>
</feature>
<feature type="binding site" evidence="1">
    <location>
        <begin position="8"/>
        <end position="15"/>
    </location>
    <ligand>
        <name>GTP</name>
        <dbReference type="ChEBI" id="CHEBI:37565"/>
        <label>1</label>
    </ligand>
</feature>
<feature type="binding site" evidence="1">
    <location>
        <begin position="55"/>
        <end position="59"/>
    </location>
    <ligand>
        <name>GTP</name>
        <dbReference type="ChEBI" id="CHEBI:37565"/>
        <label>1</label>
    </ligand>
</feature>
<feature type="binding site" evidence="1">
    <location>
        <begin position="118"/>
        <end position="121"/>
    </location>
    <ligand>
        <name>GTP</name>
        <dbReference type="ChEBI" id="CHEBI:37565"/>
        <label>1</label>
    </ligand>
</feature>
<feature type="binding site" evidence="1">
    <location>
        <begin position="179"/>
        <end position="186"/>
    </location>
    <ligand>
        <name>GTP</name>
        <dbReference type="ChEBI" id="CHEBI:37565"/>
        <label>2</label>
    </ligand>
</feature>
<feature type="binding site" evidence="1">
    <location>
        <begin position="226"/>
        <end position="230"/>
    </location>
    <ligand>
        <name>GTP</name>
        <dbReference type="ChEBI" id="CHEBI:37565"/>
        <label>2</label>
    </ligand>
</feature>
<feature type="binding site" evidence="1">
    <location>
        <begin position="291"/>
        <end position="294"/>
    </location>
    <ligand>
        <name>GTP</name>
        <dbReference type="ChEBI" id="CHEBI:37565"/>
        <label>2</label>
    </ligand>
</feature>
<protein>
    <recommendedName>
        <fullName evidence="1">GTPase Der</fullName>
    </recommendedName>
    <alternativeName>
        <fullName evidence="1">GTP-binding protein EngA</fullName>
    </alternativeName>
</protein>
<evidence type="ECO:0000255" key="1">
    <source>
        <dbReference type="HAMAP-Rule" id="MF_00195"/>
    </source>
</evidence>
<organism>
    <name type="scientific">Malacoplasma penetrans (strain HF-2)</name>
    <name type="common">Mycoplasma penetrans</name>
    <dbReference type="NCBI Taxonomy" id="272633"/>
    <lineage>
        <taxon>Bacteria</taxon>
        <taxon>Bacillati</taxon>
        <taxon>Mycoplasmatota</taxon>
        <taxon>Mycoplasmoidales</taxon>
        <taxon>Mycoplasmoidaceae</taxon>
        <taxon>Malacoplasma</taxon>
    </lineage>
</organism>
<name>DER_MALP2</name>
<proteinExistence type="inferred from homology"/>
<accession>Q8EWH6</accession>
<sequence length="444" mass="51231">MLKVAIVGKPNVGKSTLFNRIIKVNKSIVDDKPGITRDRIYANAEWLTQHFKLIDTGGLMLDEFDFKKQIELQVNYAITEADVIVFLVSYKEGINNDDHYVAKILKKHKNKKILLAVNKSETRNKDSYDDHEYLRFGFQKPYFISANHGIGIGDLLDAIVDTKLKEIKEEDTFKFCIIGRPNVGKSSLVNCILNEDRMITSNIANTTRDAIDSNFKKDNLLYTIIDTAGIRRKGKIQENVDKYAYLRVEQSISRSNLIVIVLDGSEEFNEQDEVIAGLAHKANIPSIIVVNKWDIVKEKDEKTMNKFIKTIRIKFKFLSWTPIVFLSAIENKRINTLFNEIKSIRENLNLKFNSKILTDLVFKLQMLNSPPLFNRGRIKINHVTQVDGQIPTFVLFCNNPEYLHFSYARYLENEIRKSLGLNNVPITLYFKNKTDKIRGKKNDK</sequence>
<gene>
    <name evidence="1" type="primary">der</name>
    <name type="synonym">engA</name>
    <name type="ordered locus">MYPE2290</name>
</gene>
<dbReference type="EMBL" id="BA000026">
    <property type="protein sequence ID" value="BAC44020.1"/>
    <property type="molecule type" value="Genomic_DNA"/>
</dbReference>
<dbReference type="RefSeq" id="WP_011077056.1">
    <property type="nucleotide sequence ID" value="NC_004432.1"/>
</dbReference>
<dbReference type="SMR" id="Q8EWH6"/>
<dbReference type="FunCoup" id="Q8EWH6">
    <property type="interactions" value="217"/>
</dbReference>
<dbReference type="STRING" id="272633.gene:10731329"/>
<dbReference type="KEGG" id="mpe:MYPE2290"/>
<dbReference type="eggNOG" id="COG1160">
    <property type="taxonomic scope" value="Bacteria"/>
</dbReference>
<dbReference type="HOGENOM" id="CLU_016077_6_2_14"/>
<dbReference type="InParanoid" id="Q8EWH6"/>
<dbReference type="Proteomes" id="UP000002522">
    <property type="component" value="Chromosome"/>
</dbReference>
<dbReference type="GO" id="GO:0005525">
    <property type="term" value="F:GTP binding"/>
    <property type="evidence" value="ECO:0007669"/>
    <property type="project" value="UniProtKB-UniRule"/>
</dbReference>
<dbReference type="GO" id="GO:0043022">
    <property type="term" value="F:ribosome binding"/>
    <property type="evidence" value="ECO:0007669"/>
    <property type="project" value="TreeGrafter"/>
</dbReference>
<dbReference type="GO" id="GO:0042254">
    <property type="term" value="P:ribosome biogenesis"/>
    <property type="evidence" value="ECO:0007669"/>
    <property type="project" value="UniProtKB-KW"/>
</dbReference>
<dbReference type="CDD" id="cd01894">
    <property type="entry name" value="EngA1"/>
    <property type="match status" value="1"/>
</dbReference>
<dbReference type="CDD" id="cd01895">
    <property type="entry name" value="EngA2"/>
    <property type="match status" value="1"/>
</dbReference>
<dbReference type="FunFam" id="3.40.50.300:FF:000040">
    <property type="entry name" value="GTPase Der"/>
    <property type="match status" value="1"/>
</dbReference>
<dbReference type="FunFam" id="3.40.50.300:FF:000057">
    <property type="entry name" value="GTPase Der"/>
    <property type="match status" value="1"/>
</dbReference>
<dbReference type="Gene3D" id="3.30.300.20">
    <property type="match status" value="1"/>
</dbReference>
<dbReference type="Gene3D" id="3.40.50.300">
    <property type="entry name" value="P-loop containing nucleotide triphosphate hydrolases"/>
    <property type="match status" value="2"/>
</dbReference>
<dbReference type="HAMAP" id="MF_00195">
    <property type="entry name" value="GTPase_Der"/>
    <property type="match status" value="1"/>
</dbReference>
<dbReference type="InterPro" id="IPR031166">
    <property type="entry name" value="G_ENGA"/>
</dbReference>
<dbReference type="InterPro" id="IPR006073">
    <property type="entry name" value="GTP-bd"/>
</dbReference>
<dbReference type="InterPro" id="IPR016484">
    <property type="entry name" value="GTPase_Der"/>
</dbReference>
<dbReference type="InterPro" id="IPR032859">
    <property type="entry name" value="KH_dom-like"/>
</dbReference>
<dbReference type="InterPro" id="IPR015946">
    <property type="entry name" value="KH_dom-like_a/b"/>
</dbReference>
<dbReference type="InterPro" id="IPR027417">
    <property type="entry name" value="P-loop_NTPase"/>
</dbReference>
<dbReference type="InterPro" id="IPR005225">
    <property type="entry name" value="Small_GTP-bd"/>
</dbReference>
<dbReference type="NCBIfam" id="TIGR03594">
    <property type="entry name" value="GTPase_EngA"/>
    <property type="match status" value="1"/>
</dbReference>
<dbReference type="NCBIfam" id="TIGR00231">
    <property type="entry name" value="small_GTP"/>
    <property type="match status" value="2"/>
</dbReference>
<dbReference type="PANTHER" id="PTHR43834">
    <property type="entry name" value="GTPASE DER"/>
    <property type="match status" value="1"/>
</dbReference>
<dbReference type="PANTHER" id="PTHR43834:SF6">
    <property type="entry name" value="GTPASE DER"/>
    <property type="match status" value="1"/>
</dbReference>
<dbReference type="Pfam" id="PF14714">
    <property type="entry name" value="KH_dom-like"/>
    <property type="match status" value="1"/>
</dbReference>
<dbReference type="Pfam" id="PF01926">
    <property type="entry name" value="MMR_HSR1"/>
    <property type="match status" value="2"/>
</dbReference>
<dbReference type="PIRSF" id="PIRSF006485">
    <property type="entry name" value="GTP-binding_EngA"/>
    <property type="match status" value="1"/>
</dbReference>
<dbReference type="SUPFAM" id="SSF52540">
    <property type="entry name" value="P-loop containing nucleoside triphosphate hydrolases"/>
    <property type="match status" value="2"/>
</dbReference>
<dbReference type="PROSITE" id="PS51712">
    <property type="entry name" value="G_ENGA"/>
    <property type="match status" value="2"/>
</dbReference>
<comment type="function">
    <text evidence="1">GTPase that plays an essential role in the late steps of ribosome biogenesis.</text>
</comment>
<comment type="subunit">
    <text evidence="1">Associates with the 50S ribosomal subunit.</text>
</comment>
<comment type="similarity">
    <text evidence="1">Belongs to the TRAFAC class TrmE-Era-EngA-EngB-Septin-like GTPase superfamily. EngA (Der) GTPase family.</text>
</comment>
<keyword id="KW-0342">GTP-binding</keyword>
<keyword id="KW-0547">Nucleotide-binding</keyword>
<keyword id="KW-1185">Reference proteome</keyword>
<keyword id="KW-0677">Repeat</keyword>
<keyword id="KW-0690">Ribosome biogenesis</keyword>
<reference key="1">
    <citation type="journal article" date="2002" name="Nucleic Acids Res.">
        <title>The complete genomic sequence of Mycoplasma penetrans, an intracellular bacterial pathogen in humans.</title>
        <authorList>
            <person name="Sasaki Y."/>
            <person name="Ishikawa J."/>
            <person name="Yamashita A."/>
            <person name="Oshima K."/>
            <person name="Kenri T."/>
            <person name="Furuya K."/>
            <person name="Yoshino C."/>
            <person name="Horino A."/>
            <person name="Shiba T."/>
            <person name="Sasaki T."/>
            <person name="Hattori M."/>
        </authorList>
    </citation>
    <scope>NUCLEOTIDE SEQUENCE [LARGE SCALE GENOMIC DNA]</scope>
    <source>
        <strain>HF-2</strain>
    </source>
</reference>